<comment type="subcellular location">
    <subcellularLocation>
        <location evidence="1">Cytoplasm</location>
    </subcellularLocation>
</comment>
<comment type="developmental stage">
    <text>Expression drops sharply between 4 and 8 hours of development and reaches a very low level at 24 hours.</text>
</comment>
<comment type="similarity">
    <text evidence="3">Belongs to the eukaryotic ribosomal protein eS4 family.</text>
</comment>
<organism>
    <name type="scientific">Dictyostelium discoideum</name>
    <name type="common">Social amoeba</name>
    <dbReference type="NCBI Taxonomy" id="44689"/>
    <lineage>
        <taxon>Eukaryota</taxon>
        <taxon>Amoebozoa</taxon>
        <taxon>Evosea</taxon>
        <taxon>Eumycetozoa</taxon>
        <taxon>Dictyostelia</taxon>
        <taxon>Dictyosteliales</taxon>
        <taxon>Dictyosteliaceae</taxon>
        <taxon>Dictyostelium</taxon>
    </lineage>
</organism>
<name>RS4_DICDI</name>
<accession>P51405</accession>
<accession>Q559A3</accession>
<evidence type="ECO:0000250" key="1"/>
<evidence type="ECO:0000269" key="2">
    <source>
    </source>
</evidence>
<evidence type="ECO:0000305" key="3"/>
<protein>
    <recommendedName>
        <fullName evidence="3">Small ribosomal subunit protein eS4</fullName>
    </recommendedName>
    <alternativeName>
        <fullName>40S ribosomal protein S4</fullName>
    </alternativeName>
</protein>
<keyword id="KW-0963">Cytoplasm</keyword>
<keyword id="KW-0903">Direct protein sequencing</keyword>
<keyword id="KW-1185">Reference proteome</keyword>
<keyword id="KW-0687">Ribonucleoprotein</keyword>
<keyword id="KW-0689">Ribosomal protein</keyword>
<keyword id="KW-0694">RNA-binding</keyword>
<keyword id="KW-0699">rRNA-binding</keyword>
<feature type="initiator methionine" description="Removed" evidence="2">
    <location>
        <position position="1"/>
    </location>
</feature>
<feature type="chain" id="PRO_0000130828" description="Small ribosomal subunit protein eS4">
    <location>
        <begin position="2"/>
        <end position="267"/>
    </location>
</feature>
<feature type="domain" description="S4 RNA-binding">
    <location>
        <begin position="42"/>
        <end position="104"/>
    </location>
</feature>
<proteinExistence type="evidence at protein level"/>
<reference key="1">
    <citation type="journal article" date="1998" name="Curr. Genet.">
        <title>Cloning, sequencing and developmental expression of the genes encoding S4 and S10 ribosomal proteins in the cellular slime mould Dictyostelium discoideum.</title>
        <authorList>
            <person name="Tapparo A."/>
            <person name="Satre M."/>
            <person name="Klein G."/>
        </authorList>
    </citation>
    <scope>NUCLEOTIDE SEQUENCE [MRNA]</scope>
    <scope>PROTEIN SEQUENCE OF 2-15</scope>
    <source>
        <strain>AX2</strain>
    </source>
</reference>
<reference key="2">
    <citation type="journal article" date="2002" name="Nature">
        <title>Sequence and analysis of chromosome 2 of Dictyostelium discoideum.</title>
        <authorList>
            <person name="Gloeckner G."/>
            <person name="Eichinger L."/>
            <person name="Szafranski K."/>
            <person name="Pachebat J.A."/>
            <person name="Bankier A.T."/>
            <person name="Dear P.H."/>
            <person name="Lehmann R."/>
            <person name="Baumgart C."/>
            <person name="Parra G."/>
            <person name="Abril J.F."/>
            <person name="Guigo R."/>
            <person name="Kumpf K."/>
            <person name="Tunggal B."/>
            <person name="Cox E.C."/>
            <person name="Quail M.A."/>
            <person name="Platzer M."/>
            <person name="Rosenthal A."/>
            <person name="Noegel A.A."/>
        </authorList>
    </citation>
    <scope>NUCLEOTIDE SEQUENCE [LARGE SCALE GENOMIC DNA]</scope>
    <source>
        <strain>AX4</strain>
    </source>
</reference>
<reference key="3">
    <citation type="journal article" date="2005" name="Nature">
        <title>The genome of the social amoeba Dictyostelium discoideum.</title>
        <authorList>
            <person name="Eichinger L."/>
            <person name="Pachebat J.A."/>
            <person name="Gloeckner G."/>
            <person name="Rajandream M.A."/>
            <person name="Sucgang R."/>
            <person name="Berriman M."/>
            <person name="Song J."/>
            <person name="Olsen R."/>
            <person name="Szafranski K."/>
            <person name="Xu Q."/>
            <person name="Tunggal B."/>
            <person name="Kummerfeld S."/>
            <person name="Madera M."/>
            <person name="Konfortov B.A."/>
            <person name="Rivero F."/>
            <person name="Bankier A.T."/>
            <person name="Lehmann R."/>
            <person name="Hamlin N."/>
            <person name="Davies R."/>
            <person name="Gaudet P."/>
            <person name="Fey P."/>
            <person name="Pilcher K."/>
            <person name="Chen G."/>
            <person name="Saunders D."/>
            <person name="Sodergren E.J."/>
            <person name="Davis P."/>
            <person name="Kerhornou A."/>
            <person name="Nie X."/>
            <person name="Hall N."/>
            <person name="Anjard C."/>
            <person name="Hemphill L."/>
            <person name="Bason N."/>
            <person name="Farbrother P."/>
            <person name="Desany B."/>
            <person name="Just E."/>
            <person name="Morio T."/>
            <person name="Rost R."/>
            <person name="Churcher C.M."/>
            <person name="Cooper J."/>
            <person name="Haydock S."/>
            <person name="van Driessche N."/>
            <person name="Cronin A."/>
            <person name="Goodhead I."/>
            <person name="Muzny D.M."/>
            <person name="Mourier T."/>
            <person name="Pain A."/>
            <person name="Lu M."/>
            <person name="Harper D."/>
            <person name="Lindsay R."/>
            <person name="Hauser H."/>
            <person name="James K.D."/>
            <person name="Quiles M."/>
            <person name="Madan Babu M."/>
            <person name="Saito T."/>
            <person name="Buchrieser C."/>
            <person name="Wardroper A."/>
            <person name="Felder M."/>
            <person name="Thangavelu M."/>
            <person name="Johnson D."/>
            <person name="Knights A."/>
            <person name="Loulseged H."/>
            <person name="Mungall K.L."/>
            <person name="Oliver K."/>
            <person name="Price C."/>
            <person name="Quail M.A."/>
            <person name="Urushihara H."/>
            <person name="Hernandez J."/>
            <person name="Rabbinowitsch E."/>
            <person name="Steffen D."/>
            <person name="Sanders M."/>
            <person name="Ma J."/>
            <person name="Kohara Y."/>
            <person name="Sharp S."/>
            <person name="Simmonds M.N."/>
            <person name="Spiegler S."/>
            <person name="Tivey A."/>
            <person name="Sugano S."/>
            <person name="White B."/>
            <person name="Walker D."/>
            <person name="Woodward J.R."/>
            <person name="Winckler T."/>
            <person name="Tanaka Y."/>
            <person name="Shaulsky G."/>
            <person name="Schleicher M."/>
            <person name="Weinstock G.M."/>
            <person name="Rosenthal A."/>
            <person name="Cox E.C."/>
            <person name="Chisholm R.L."/>
            <person name="Gibbs R.A."/>
            <person name="Loomis W.F."/>
            <person name="Platzer M."/>
            <person name="Kay R.R."/>
            <person name="Williams J.G."/>
            <person name="Dear P.H."/>
            <person name="Noegel A.A."/>
            <person name="Barrell B.G."/>
            <person name="Kuspa A."/>
        </authorList>
    </citation>
    <scope>NUCLEOTIDE SEQUENCE [LARGE SCALE GENOMIC DNA]</scope>
    <source>
        <strain>AX4</strain>
    </source>
</reference>
<reference key="4">
    <citation type="submission" date="1995-10" db="EMBL/GenBank/DDBJ databases">
        <title>Expression of genes encoding two ribosomal proteins, S4 and P0, during growth and differentiation of Dictyostelium discoideum.</title>
        <authorList>
            <person name="Hogan L.H."/>
        </authorList>
    </citation>
    <scope>NUCLEOTIDE SEQUENCE [MRNA] OF 195-267</scope>
    <source>
        <strain>V12M2</strain>
    </source>
</reference>
<gene>
    <name type="primary">rps4</name>
    <name type="ORF">DDB_G0272825</name>
</gene>
<sequence length="267" mass="30036">MARGPKKHLKRLAAPNHWMLDKLSGKWAPRPSSGPHKLRECLPLILVLRNRLKYALTKKEVTLILMQRLVKVDGKVRTDPNYPAGFMDVISIEKTKENFRLLFDPKGRFTLQRITPEEAKFKLARVTRVETGNQGIPYVHTDDGRTIRYPDPAISIHDTIKIDIESGKITAFIPFEVNNLCMIVGGHNLGRVGAVTHREKHPGSFDIVHVTDTAGHQFATRLSNVFIIGKASQTFVSLPAGKGVRRSRVDERNAALKRRGEKIETVA</sequence>
<dbReference type="EMBL" id="AF039748">
    <property type="protein sequence ID" value="AAD04813.1"/>
    <property type="molecule type" value="mRNA"/>
</dbReference>
<dbReference type="EMBL" id="AAFI02000008">
    <property type="protein sequence ID" value="EAL71050.1"/>
    <property type="molecule type" value="Genomic_DNA"/>
</dbReference>
<dbReference type="EMBL" id="U15424">
    <property type="protein sequence ID" value="AAA76860.1"/>
    <property type="molecule type" value="mRNA"/>
</dbReference>
<dbReference type="RefSeq" id="XP_644913.1">
    <property type="nucleotide sequence ID" value="XM_639821.1"/>
</dbReference>
<dbReference type="SMR" id="P51405"/>
<dbReference type="BioGRID" id="1243595">
    <property type="interactions" value="4"/>
</dbReference>
<dbReference type="FunCoup" id="P51405">
    <property type="interactions" value="523"/>
</dbReference>
<dbReference type="STRING" id="44689.P51405"/>
<dbReference type="PaxDb" id="44689-DDB0185063"/>
<dbReference type="EnsemblProtists" id="EAL71050">
    <property type="protein sequence ID" value="EAL71050"/>
    <property type="gene ID" value="DDB_G0272825"/>
</dbReference>
<dbReference type="GeneID" id="8618592"/>
<dbReference type="KEGG" id="ddi:DDB_G0272825"/>
<dbReference type="dictyBase" id="DDB_G0272825">
    <property type="gene designation" value="rps4"/>
</dbReference>
<dbReference type="VEuPathDB" id="AmoebaDB:DDB_G0272825"/>
<dbReference type="eggNOG" id="KOG0378">
    <property type="taxonomic scope" value="Eukaryota"/>
</dbReference>
<dbReference type="HOGENOM" id="CLU_060400_1_0_1"/>
<dbReference type="InParanoid" id="P51405"/>
<dbReference type="OMA" id="WMLDELT"/>
<dbReference type="PhylomeDB" id="P51405"/>
<dbReference type="Reactome" id="R-DDI-156827">
    <property type="pathway name" value="L13a-mediated translational silencing of Ceruloplasmin expression"/>
</dbReference>
<dbReference type="Reactome" id="R-DDI-1799339">
    <property type="pathway name" value="SRP-dependent cotranslational protein targeting to membrane"/>
</dbReference>
<dbReference type="Reactome" id="R-DDI-72689">
    <property type="pathway name" value="Formation of a pool of free 40S subunits"/>
</dbReference>
<dbReference type="Reactome" id="R-DDI-72695">
    <property type="pathway name" value="Formation of the ternary complex, and subsequently, the 43S complex"/>
</dbReference>
<dbReference type="Reactome" id="R-DDI-72702">
    <property type="pathway name" value="Ribosomal scanning and start codon recognition"/>
</dbReference>
<dbReference type="Reactome" id="R-DDI-72706">
    <property type="pathway name" value="GTP hydrolysis and joining of the 60S ribosomal subunit"/>
</dbReference>
<dbReference type="Reactome" id="R-DDI-975956">
    <property type="pathway name" value="Nonsense Mediated Decay (NMD) independent of the Exon Junction Complex (EJC)"/>
</dbReference>
<dbReference type="Reactome" id="R-DDI-975957">
    <property type="pathway name" value="Nonsense Mediated Decay (NMD) enhanced by the Exon Junction Complex (EJC)"/>
</dbReference>
<dbReference type="PRO" id="PR:P51405"/>
<dbReference type="Proteomes" id="UP000002195">
    <property type="component" value="Chromosome 2"/>
</dbReference>
<dbReference type="GO" id="GO:0005856">
    <property type="term" value="C:cytoskeleton"/>
    <property type="evidence" value="ECO:0000314"/>
    <property type="project" value="dictyBase"/>
</dbReference>
<dbReference type="GO" id="GO:0022627">
    <property type="term" value="C:cytosolic small ribosomal subunit"/>
    <property type="evidence" value="ECO:0000318"/>
    <property type="project" value="GO_Central"/>
</dbReference>
<dbReference type="GO" id="GO:0031012">
    <property type="term" value="C:extracellular matrix"/>
    <property type="evidence" value="ECO:0007005"/>
    <property type="project" value="dictyBase"/>
</dbReference>
<dbReference type="GO" id="GO:0032991">
    <property type="term" value="C:protein-containing complex"/>
    <property type="evidence" value="ECO:0000314"/>
    <property type="project" value="dictyBase"/>
</dbReference>
<dbReference type="GO" id="GO:0000822">
    <property type="term" value="F:inositol hexakisphosphate binding"/>
    <property type="evidence" value="ECO:0000314"/>
    <property type="project" value="dictyBase"/>
</dbReference>
<dbReference type="GO" id="GO:0003723">
    <property type="term" value="F:RNA binding"/>
    <property type="evidence" value="ECO:0000318"/>
    <property type="project" value="GO_Central"/>
</dbReference>
<dbReference type="GO" id="GO:0019843">
    <property type="term" value="F:rRNA binding"/>
    <property type="evidence" value="ECO:0007669"/>
    <property type="project" value="UniProtKB-KW"/>
</dbReference>
<dbReference type="GO" id="GO:0003735">
    <property type="term" value="F:structural constituent of ribosome"/>
    <property type="evidence" value="ECO:0000318"/>
    <property type="project" value="GO_Central"/>
</dbReference>
<dbReference type="GO" id="GO:0030036">
    <property type="term" value="P:actin cytoskeleton organization"/>
    <property type="evidence" value="ECO:0000315"/>
    <property type="project" value="dictyBase"/>
</dbReference>
<dbReference type="GO" id="GO:0006412">
    <property type="term" value="P:translation"/>
    <property type="evidence" value="ECO:0000318"/>
    <property type="project" value="GO_Central"/>
</dbReference>
<dbReference type="CDD" id="cd06087">
    <property type="entry name" value="KOW_RPS4"/>
    <property type="match status" value="1"/>
</dbReference>
<dbReference type="CDD" id="cd00165">
    <property type="entry name" value="S4"/>
    <property type="match status" value="1"/>
</dbReference>
<dbReference type="FunFam" id="2.30.30.30:FF:000005">
    <property type="entry name" value="40S ribosomal protein S4"/>
    <property type="match status" value="1"/>
</dbReference>
<dbReference type="FunFam" id="2.40.50.740:FF:000001">
    <property type="entry name" value="40S ribosomal protein S4"/>
    <property type="match status" value="1"/>
</dbReference>
<dbReference type="FunFam" id="3.10.290.10:FF:000002">
    <property type="entry name" value="40S ribosomal protein S4"/>
    <property type="match status" value="1"/>
</dbReference>
<dbReference type="Gene3D" id="2.30.30.30">
    <property type="match status" value="1"/>
</dbReference>
<dbReference type="Gene3D" id="2.40.50.740">
    <property type="match status" value="1"/>
</dbReference>
<dbReference type="Gene3D" id="3.10.290.10">
    <property type="entry name" value="RNA-binding S4 domain"/>
    <property type="match status" value="1"/>
</dbReference>
<dbReference type="HAMAP" id="MF_00485">
    <property type="entry name" value="Ribosomal_eS4"/>
    <property type="match status" value="1"/>
</dbReference>
<dbReference type="InterPro" id="IPR014722">
    <property type="entry name" value="Rib_uL2_dom2"/>
</dbReference>
<dbReference type="InterPro" id="IPR000876">
    <property type="entry name" value="Ribosomal_eS4"/>
</dbReference>
<dbReference type="InterPro" id="IPR032277">
    <property type="entry name" value="Ribosomal_eS4_C"/>
</dbReference>
<dbReference type="InterPro" id="IPR013845">
    <property type="entry name" value="Ribosomal_eS4_central_region"/>
</dbReference>
<dbReference type="InterPro" id="IPR038237">
    <property type="entry name" value="Ribosomal_eS4_central_sf"/>
</dbReference>
<dbReference type="InterPro" id="IPR041982">
    <property type="entry name" value="Ribosomal_eS4_KOW"/>
</dbReference>
<dbReference type="InterPro" id="IPR013843">
    <property type="entry name" value="Ribosomal_eS4_N"/>
</dbReference>
<dbReference type="InterPro" id="IPR018199">
    <property type="entry name" value="Ribosomal_eS4_N_CS"/>
</dbReference>
<dbReference type="InterPro" id="IPR002942">
    <property type="entry name" value="S4_RNA-bd"/>
</dbReference>
<dbReference type="InterPro" id="IPR036986">
    <property type="entry name" value="S4_RNA-bd_sf"/>
</dbReference>
<dbReference type="PANTHER" id="PTHR11581">
    <property type="entry name" value="30S/40S RIBOSOMAL PROTEIN S4"/>
    <property type="match status" value="1"/>
</dbReference>
<dbReference type="PANTHER" id="PTHR11581:SF0">
    <property type="entry name" value="SMALL RIBOSOMAL SUBUNIT PROTEIN ES4"/>
    <property type="match status" value="1"/>
</dbReference>
<dbReference type="Pfam" id="PF16121">
    <property type="entry name" value="40S_S4_C"/>
    <property type="match status" value="1"/>
</dbReference>
<dbReference type="Pfam" id="PF00900">
    <property type="entry name" value="Ribosomal_S4e"/>
    <property type="match status" value="1"/>
</dbReference>
<dbReference type="Pfam" id="PF08071">
    <property type="entry name" value="RS4NT"/>
    <property type="match status" value="1"/>
</dbReference>
<dbReference type="Pfam" id="PF01479">
    <property type="entry name" value="S4"/>
    <property type="match status" value="1"/>
</dbReference>
<dbReference type="PIRSF" id="PIRSF002116">
    <property type="entry name" value="Ribosomal_S4"/>
    <property type="match status" value="1"/>
</dbReference>
<dbReference type="SMART" id="SM00363">
    <property type="entry name" value="S4"/>
    <property type="match status" value="1"/>
</dbReference>
<dbReference type="PROSITE" id="PS00528">
    <property type="entry name" value="RIBOSOMAL_S4E"/>
    <property type="match status" value="1"/>
</dbReference>
<dbReference type="PROSITE" id="PS50889">
    <property type="entry name" value="S4"/>
    <property type="match status" value="1"/>
</dbReference>